<reference key="1">
    <citation type="journal article" date="2004" name="Development">
        <title>Three putative murine Teashirt orthologues specify trunk structures in Drosophila in the same way as the Drosophila teashirt gene.</title>
        <authorList>
            <person name="Manfroid I."/>
            <person name="Caubit X."/>
            <person name="Kerridge S."/>
            <person name="Fasano L."/>
        </authorList>
    </citation>
    <scope>NUCLEOTIDE SEQUENCE [MRNA]</scope>
    <scope>POSSIBLE FUNCTION</scope>
</reference>
<reference key="2">
    <citation type="submission" date="2005-02" db="EMBL/GenBank/DDBJ databases">
        <title>Prediction of the coding sequences of mouse homologues of KIAA gene. The complete nucleotide sequences of mouse KIAA-homologous cDNAs identified by screening of terminal sequences of cDNA clones randomly sampled from size-fractionated libraries.</title>
        <authorList>
            <person name="Okazaki N."/>
            <person name="Kikuno R.F."/>
            <person name="Ohara R."/>
            <person name="Inamoto S."/>
            <person name="Nagase T."/>
            <person name="Ohara O."/>
            <person name="Koga H."/>
        </authorList>
    </citation>
    <scope>NUCLEOTIDE SEQUENCE [LARGE SCALE MRNA]</scope>
    <source>
        <tissue>Fetal brain</tissue>
    </source>
</reference>
<reference key="3">
    <citation type="journal article" date="2008" name="Development">
        <title>Teashirt 3 is necessary for ureteral smooth muscle differentiation downstream of SHH and BMP4.</title>
        <authorList>
            <person name="Caubit X."/>
            <person name="Lye C.M."/>
            <person name="Martin E."/>
            <person name="Core N."/>
            <person name="Long D.A."/>
            <person name="Vola C."/>
            <person name="Jenkins D."/>
            <person name="Garratt A.N."/>
            <person name="Skaer H."/>
            <person name="Woolf A.S."/>
            <person name="Fasano L."/>
        </authorList>
    </citation>
    <scope>FUNCTION</scope>
    <scope>DISRUPTION PHENOTYPE</scope>
    <scope>DEVELOPMENTAL STAGE</scope>
    <scope>TISSUE SPECIFICITY</scope>
</reference>
<reference key="4">
    <citation type="journal article" date="2009" name="PLoS ONE">
        <title>FE65 binds Teashirt, inhibiting expression of the primate-specific caspase-4.</title>
        <authorList>
            <person name="Kajiwara Y."/>
            <person name="Akram A."/>
            <person name="Katsel P."/>
            <person name="Haroutunian V."/>
            <person name="Schmeidler J."/>
            <person name="Beecham G."/>
            <person name="Haines J.L."/>
            <person name="Pericak-Vance M.A."/>
            <person name="Buxbaum J.D."/>
        </authorList>
    </citation>
    <scope>INTERACTION WITH APBB1</scope>
</reference>
<reference key="5">
    <citation type="journal article" date="2010" name="J. Neurosci.">
        <title>Teashirt 3 regulates development of neurons involved in both respiratory rhythm and airflow control.</title>
        <authorList>
            <person name="Caubit X."/>
            <person name="Thoby-Brisson M."/>
            <person name="Voituron N."/>
            <person name="Filippi P."/>
            <person name="Bevengut M."/>
            <person name="Faralli H."/>
            <person name="Zanella S."/>
            <person name="Fortin G."/>
            <person name="Hilaire G."/>
            <person name="Fasano L."/>
        </authorList>
    </citation>
    <scope>FUNCTION</scope>
    <scope>DISRUPTION PHENOTYPE</scope>
    <scope>DEVELOPMENTAL STAGE</scope>
</reference>
<reference key="6">
    <citation type="journal article" date="2010" name="Nephrol. Dial. Transplant.">
        <title>Analysis of TSHZ2 and TSHZ3 genes in congenital pelvi-ureteric junction obstruction.</title>
        <authorList>
            <person name="Jenkins D."/>
            <person name="Caubit X."/>
            <person name="Dimovski A."/>
            <person name="Matevska N."/>
            <person name="Lye C.M."/>
            <person name="Cabuk F."/>
            <person name="Gucev Z."/>
            <person name="Tasic V."/>
            <person name="Fasano L."/>
            <person name="Woolf A.S."/>
        </authorList>
    </citation>
    <scope>FUNCTION</scope>
    <scope>DEVELOPMENTAL STAGE</scope>
</reference>
<reference key="7">
    <citation type="journal article" date="2016" name="Nat. Genet.">
        <title>TSHZ3 deletion causes an autism syndrome and defects in cortical projection neurons.</title>
        <authorList>
            <person name="Caubit X."/>
            <person name="Gubellini P."/>
            <person name="Andrieux J."/>
            <person name="Roubertoux P.L."/>
            <person name="Metwaly M."/>
            <person name="Jacq B."/>
            <person name="Fatmi A."/>
            <person name="Had-Aissouni L."/>
            <person name="Kwan K.Y."/>
            <person name="Salin P."/>
            <person name="Carlier M."/>
            <person name="Lieden A."/>
            <person name="Rudd E."/>
            <person name="Shinawi M."/>
            <person name="Vincent-Delorme C."/>
            <person name="Cuisset J.M."/>
            <person name="Lemaitre M.P."/>
            <person name="Abderrehamane F."/>
            <person name="Duban B."/>
            <person name="Lemaitre J.F."/>
            <person name="Woolf A.S."/>
            <person name="Bockenhauer D."/>
            <person name="Severac D."/>
            <person name="Dubois E."/>
            <person name="Zhu Y."/>
            <person name="Sestan N."/>
            <person name="Garratt A.N."/>
            <person name="Kerkerian-Le Goff L."/>
            <person name="Fasano L."/>
        </authorList>
    </citation>
    <scope>FUNCTION</scope>
    <scope>TISSUE SPECIFICITY</scope>
</reference>
<accession>Q8CGV9</accession>
<accession>Q5DTX4</accession>
<dbReference type="EMBL" id="AY063491">
    <property type="protein sequence ID" value="AAL38978.1"/>
    <property type="molecule type" value="mRNA"/>
</dbReference>
<dbReference type="EMBL" id="AK220396">
    <property type="protein sequence ID" value="BAD90255.1"/>
    <property type="status" value="ALT_FRAME"/>
    <property type="molecule type" value="mRNA"/>
</dbReference>
<dbReference type="CCDS" id="CCDS39913.1"/>
<dbReference type="RefSeq" id="NP_758502.1">
    <property type="nucleotide sequence ID" value="NM_172298.2"/>
</dbReference>
<dbReference type="SMR" id="Q8CGV9"/>
<dbReference type="BioGRID" id="232587">
    <property type="interactions" value="1"/>
</dbReference>
<dbReference type="FunCoup" id="Q8CGV9">
    <property type="interactions" value="1429"/>
</dbReference>
<dbReference type="STRING" id="10090.ENSMUSP00000021641"/>
<dbReference type="iPTMnet" id="Q8CGV9"/>
<dbReference type="PhosphoSitePlus" id="Q8CGV9"/>
<dbReference type="PaxDb" id="10090-ENSMUSP00000021641"/>
<dbReference type="ProteomicsDB" id="298247"/>
<dbReference type="DNASU" id="243931"/>
<dbReference type="GeneID" id="243931"/>
<dbReference type="KEGG" id="mmu:243931"/>
<dbReference type="UCSC" id="uc009gkj.1">
    <property type="organism name" value="mouse"/>
</dbReference>
<dbReference type="AGR" id="MGI:2442819"/>
<dbReference type="CTD" id="57616"/>
<dbReference type="MGI" id="MGI:2442819">
    <property type="gene designation" value="Tshz3"/>
</dbReference>
<dbReference type="eggNOG" id="ENOG502RJS7">
    <property type="taxonomic scope" value="Eukaryota"/>
</dbReference>
<dbReference type="InParanoid" id="Q8CGV9"/>
<dbReference type="OrthoDB" id="5815793at2759"/>
<dbReference type="PhylomeDB" id="Q8CGV9"/>
<dbReference type="TreeFam" id="TF328447"/>
<dbReference type="BioGRID-ORCS" id="243931">
    <property type="hits" value="4 hits in 77 CRISPR screens"/>
</dbReference>
<dbReference type="ChiTaRS" id="Tshz3">
    <property type="organism name" value="mouse"/>
</dbReference>
<dbReference type="PRO" id="PR:Q8CGV9"/>
<dbReference type="Proteomes" id="UP000000589">
    <property type="component" value="Unplaced"/>
</dbReference>
<dbReference type="RNAct" id="Q8CGV9">
    <property type="molecule type" value="protein"/>
</dbReference>
<dbReference type="GO" id="GO:0030426">
    <property type="term" value="C:growth cone"/>
    <property type="evidence" value="ECO:0007669"/>
    <property type="project" value="UniProtKB-SubCell"/>
</dbReference>
<dbReference type="GO" id="GO:0005739">
    <property type="term" value="C:mitochondrion"/>
    <property type="evidence" value="ECO:0007005"/>
    <property type="project" value="MGI"/>
</dbReference>
<dbReference type="GO" id="GO:0005634">
    <property type="term" value="C:nucleus"/>
    <property type="evidence" value="ECO:0000250"/>
    <property type="project" value="UniProtKB"/>
</dbReference>
<dbReference type="GO" id="GO:0003682">
    <property type="term" value="F:chromatin binding"/>
    <property type="evidence" value="ECO:0000250"/>
    <property type="project" value="UniProtKB"/>
</dbReference>
<dbReference type="GO" id="GO:0003677">
    <property type="term" value="F:DNA binding"/>
    <property type="evidence" value="ECO:0007669"/>
    <property type="project" value="UniProtKB-KW"/>
</dbReference>
<dbReference type="GO" id="GO:0008270">
    <property type="term" value="F:zinc ion binding"/>
    <property type="evidence" value="ECO:0007669"/>
    <property type="project" value="UniProtKB-KW"/>
</dbReference>
<dbReference type="GO" id="GO:0001701">
    <property type="term" value="P:in utero embryonic development"/>
    <property type="evidence" value="ECO:0000315"/>
    <property type="project" value="MGI"/>
</dbReference>
<dbReference type="GO" id="GO:0060993">
    <property type="term" value="P:kidney morphogenesis"/>
    <property type="evidence" value="ECO:0000315"/>
    <property type="project" value="MGI"/>
</dbReference>
<dbReference type="GO" id="GO:0072195">
    <property type="term" value="P:kidney smooth muscle cell differentiation"/>
    <property type="evidence" value="ECO:0000315"/>
    <property type="project" value="UniProtKB"/>
</dbReference>
<dbReference type="GO" id="GO:0060291">
    <property type="term" value="P:long-term synaptic potentiation"/>
    <property type="evidence" value="ECO:0000315"/>
    <property type="project" value="UniProtKB"/>
</dbReference>
<dbReference type="GO" id="GO:0030324">
    <property type="term" value="P:lung development"/>
    <property type="evidence" value="ECO:0000315"/>
    <property type="project" value="UniProtKB"/>
</dbReference>
<dbReference type="GO" id="GO:0001656">
    <property type="term" value="P:metanephros development"/>
    <property type="evidence" value="ECO:0000270"/>
    <property type="project" value="UniProtKB"/>
</dbReference>
<dbReference type="GO" id="GO:0050881">
    <property type="term" value="P:musculoskeletal movement"/>
    <property type="evidence" value="ECO:0000315"/>
    <property type="project" value="MGI"/>
</dbReference>
<dbReference type="GO" id="GO:0045892">
    <property type="term" value="P:negative regulation of DNA-templated transcription"/>
    <property type="evidence" value="ECO:0000250"/>
    <property type="project" value="UniProtKB"/>
</dbReference>
<dbReference type="GO" id="GO:0051152">
    <property type="term" value="P:positive regulation of smooth muscle cell differentiation"/>
    <property type="evidence" value="ECO:0000315"/>
    <property type="project" value="MGI"/>
</dbReference>
<dbReference type="GO" id="GO:0051968">
    <property type="term" value="P:positive regulation of synaptic transmission, glutamatergic"/>
    <property type="evidence" value="ECO:0000315"/>
    <property type="project" value="UniProtKB"/>
</dbReference>
<dbReference type="GO" id="GO:0002087">
    <property type="term" value="P:regulation of respiratory gaseous exchange by nervous system process"/>
    <property type="evidence" value="ECO:0000315"/>
    <property type="project" value="UniProtKB"/>
</dbReference>
<dbReference type="GO" id="GO:0050975">
    <property type="term" value="P:sensory perception of touch"/>
    <property type="evidence" value="ECO:0000315"/>
    <property type="project" value="MGI"/>
</dbReference>
<dbReference type="GO" id="GO:0048745">
    <property type="term" value="P:smooth muscle tissue development"/>
    <property type="evidence" value="ECO:0000315"/>
    <property type="project" value="MGI"/>
</dbReference>
<dbReference type="GO" id="GO:0072193">
    <property type="term" value="P:ureter smooth muscle cell differentiation"/>
    <property type="evidence" value="ECO:0000315"/>
    <property type="project" value="UniProtKB"/>
</dbReference>
<dbReference type="GO" id="GO:0001657">
    <property type="term" value="P:ureteric bud development"/>
    <property type="evidence" value="ECO:0000315"/>
    <property type="project" value="MGI"/>
</dbReference>
<dbReference type="GO" id="GO:0072105">
    <property type="term" value="P:ureteric peristalsis"/>
    <property type="evidence" value="ECO:0000315"/>
    <property type="project" value="UniProtKB"/>
</dbReference>
<dbReference type="CDD" id="cd00086">
    <property type="entry name" value="homeodomain"/>
    <property type="match status" value="1"/>
</dbReference>
<dbReference type="Gene3D" id="3.30.160.60">
    <property type="entry name" value="Classic Zinc Finger"/>
    <property type="match status" value="2"/>
</dbReference>
<dbReference type="InterPro" id="IPR001356">
    <property type="entry name" value="HD"/>
</dbReference>
<dbReference type="InterPro" id="IPR027008">
    <property type="entry name" value="Teashirt_fam"/>
</dbReference>
<dbReference type="InterPro" id="IPR013087">
    <property type="entry name" value="Znf_C2H2_type"/>
</dbReference>
<dbReference type="PANTHER" id="PTHR12487:SF5">
    <property type="entry name" value="TEASHIRT HOMOLOG 3"/>
    <property type="match status" value="1"/>
</dbReference>
<dbReference type="PANTHER" id="PTHR12487">
    <property type="entry name" value="TEASHIRT-RELATED"/>
    <property type="match status" value="1"/>
</dbReference>
<dbReference type="Pfam" id="PF13912">
    <property type="entry name" value="zf-C2H2_6"/>
    <property type="match status" value="1"/>
</dbReference>
<dbReference type="SMART" id="SM00389">
    <property type="entry name" value="HOX"/>
    <property type="match status" value="1"/>
</dbReference>
<dbReference type="SMART" id="SM00355">
    <property type="entry name" value="ZnF_C2H2"/>
    <property type="match status" value="5"/>
</dbReference>
<dbReference type="PROSITE" id="PS50071">
    <property type="entry name" value="HOMEOBOX_2"/>
    <property type="match status" value="1"/>
</dbReference>
<dbReference type="PROSITE" id="PS00028">
    <property type="entry name" value="ZINC_FINGER_C2H2_1"/>
    <property type="match status" value="4"/>
</dbReference>
<dbReference type="PROSITE" id="PS50157">
    <property type="entry name" value="ZINC_FINGER_C2H2_2"/>
    <property type="match status" value="2"/>
</dbReference>
<proteinExistence type="evidence at protein level"/>
<sequence>MPRRKQQAPRRAAAYVSDELKAAALVEDDVEPEEQAADGEPSAKYMCPEKELSKACPSYQNSPAAEFSSHEMDSESHISETSDRMADFESSSIKNEEETKEVQVPLEDTTVSDSLEQMKAVYNNFLSNSYWSNLNLNLHQPSSENNGGSSSSSSSSSSSCGSGSFDWHQSAMAKTLQQVSQNRMLPEPSLFSTVQLYRQSSKLYGSIFTGASKFRCKDCSAAYDTLVELTVHMNETGHYRDDNHETDNNNPKRWSKPRKRSLLEMEGKEDAQKVLKCMYCGHSFESLQDLSVHMIKTKHYQKVPLKEPVTPVAAKIIPAARKKPSLELELPSSPDSTGGTPKATLSDASDALQKNSNPYITPNNRYGHQNGASYAWHFEARKSQILKCMECGSSHDTLQELTAHMMVTGHFIKVTNSAMKKGKPIMETPVTPTITTLLDEKVQSVPLAATTFTSPSNTPASVSPKLAVEIKKEVDKEKAVPDEKPKEREKPSEEEEKYDISSKYHYLTENDLEESPKGGLDILKSLENTVTSAINKAQNGTPSWGGYPSIHAAYQLPNMMKLSLGSSGKSTPLKPMFGNSEIVSPTKTQTLVSPPSSQTSPMPKTNFHAMEELVKKVTEKVAKVEEKMKEPEGKLSPPKRATPSPCSSEQSEPIKMEASSDGSFKSQENSPSPPRDACKEASPSAEPVENGKELVKPLSGGLSGSTAIITDHPPEQPFVNPLSALQSVMNIHLGKAAKPSLPALDPMSMLFKMSNSLAEKAAVATPPPLQAKKAEHLDRYFYHVNNDQPIDLTKGKSDKGCSLGSGLLSPTSTSPATSSSTVTTAKTSAVVSFMSNSPLRENALSDISDMLKNLTESHTSKSSTPSSISEKSDIDGATLEEAEESTPAQKRKGRQSNWNPQHLLILQAQFAASLRQTSEGKYIMSDLSPQERMHISRFTGLSMTTISHWLANVKYQLRRTGGTKFLKNLDTGHPVFFCNDCASQIRTPSTYISHLESHLGFRLRDLSKLSTEQINNQIAQTKSPSEKLVTSSPEEDLGTTYQCKLCNRTFASKHAVKLHLSKTHGKSPEDHLLFVSELEKQ</sequence>
<gene>
    <name type="primary">Tshz3</name>
    <name type="synonym">Kiaa1474</name>
    <name type="synonym">Tsh3</name>
    <name type="synonym">Zfp537</name>
    <name type="synonym">Znf537</name>
</gene>
<protein>
    <recommendedName>
        <fullName>Teashirt homolog 3</fullName>
    </recommendedName>
    <alternativeName>
        <fullName>Zinc finger protein 537</fullName>
    </alternativeName>
</protein>
<organism>
    <name type="scientific">Mus musculus</name>
    <name type="common">Mouse</name>
    <dbReference type="NCBI Taxonomy" id="10090"/>
    <lineage>
        <taxon>Eukaryota</taxon>
        <taxon>Metazoa</taxon>
        <taxon>Chordata</taxon>
        <taxon>Craniata</taxon>
        <taxon>Vertebrata</taxon>
        <taxon>Euteleostomi</taxon>
        <taxon>Mammalia</taxon>
        <taxon>Eutheria</taxon>
        <taxon>Euarchontoglires</taxon>
        <taxon>Glires</taxon>
        <taxon>Rodentia</taxon>
        <taxon>Myomorpha</taxon>
        <taxon>Muroidea</taxon>
        <taxon>Muridae</taxon>
        <taxon>Murinae</taxon>
        <taxon>Mus</taxon>
        <taxon>Mus</taxon>
    </lineage>
</organism>
<comment type="function">
    <text evidence="7 9 10 11">Transcriptional regulator involved in developmental processes. Functions in association with APBB1, SET and HDAC factors as a transcriptional repressor, that inhibits the expression of CASP4. TSHZ3-mediated transcription repression involves the recruitment of histone deacetylases HDAC1 and HDAC2. Associates with chromatin in a region surrounding the CASP4 transcriptional start site(s). Regulates the development of neurons involved in both respiratory rhythm and airflow control. Promotes maintenance of nucleus ambiguus (nA) motoneurons, which govern upper airway function, and establishes a respiratory rhythm generator (RRG) activity compatible with survival at birth. Involved in the differentiation of the proximal uretic smooth muscle cells during developmental processes. Involved in the up-regulation of myocardin, that directs the expression of smooth muscle cells in the proximal ureter. Involved in the modulation of glutamatergic synaptic transmission and long-term synaptic potentiation (PubMed:27668656).</text>
</comment>
<comment type="subunit">
    <text evidence="1 8">Interacts (via N-terminus) with HDAC1 and HDAC2; the interaction is direct. Found in a trimeric complex with APBB1 and HDAC1; the interaction between HDAC1 and APBB1 is mediated by TSHZ3 (By similarity). Interacts (via homeobox domain) with APBB1 (via PID domain 1).</text>
</comment>
<comment type="subcellular location">
    <subcellularLocation>
        <location evidence="5">Nucleus</location>
    </subcellularLocation>
    <subcellularLocation>
        <location evidence="1">Cell projection</location>
        <location evidence="1">Growth cone</location>
    </subcellularLocation>
    <text evidence="1">Colocalizes with APBB1 in the nucleus. Colocalizes with APBB1 in axonal growth cone (By similarity).</text>
</comment>
<comment type="tissue specificity">
    <text evidence="11">Expressed in corticostriatal neurons.</text>
</comment>
<comment type="developmental stage">
    <text evidence="7 9 10">Expressed in branchio and viscero motoneurons at 10.5 dpc. Expressed in the nucleus ambiguus (nA) motoneurons at 15.5 dpc. Expressed in the brainstem respiratory rhythm generator (RRG), including two interacting neuronal networks constituting two oscillators: the pre-Boetzinger complex (preBoetC) at 15.5 dpc and the embryonic parafacial respiratory group (e-pF or pFRG) at 14.4 dpc, that contributes both to motor coordination of the respiratory apparatus and confers central chemosensitivity, as well as in cranial motoneurons targeting chest muscles that control the upper airway opening. Expressed in the developing urinary tract. Expressed in ureteric bud (UB) stalk at 11.5 dpc. Expressed in mesenchymal cells along and around the UB stalk, and absent from the UB epithelium and in scattered cells within the metanephric medullary stroma at 12.5 dpc. Expressed in mesenchymal cells in proximal ureters at 14 dpc, preceding the smooth muscle precursor cells differentiation and the expression of contractile proteins from 15 dpc. Expressed in mesenchymal cells of the ureter and renal pelvis, and in renal medullary stroma, in the mesenchymal cells adjacent to the epithelium and in the peripheral mesenchyme where smooth muscle (SM) starts to differentiate; the outer rim of nephrogenic mesenchyme was negative at 15.5. In the bladder, expressed in the submucosal loose connective tissue adjacent to the epithelium and in the detrusor SM layer at 18.5 dpc.</text>
</comment>
<comment type="induction">
    <text>Up-regulated by BMP4.</text>
</comment>
<comment type="disruption phenotype">
    <text evidence="7 10">Mice fail to breathe and die at birth. Display pronounced cell death of motoneurons in the nucleus ambiguus and induce strong alterations of rhythmogenesis in the embryonic parafacial respiratory group (e-pF or pFRG) oscillator and cranial motoneurons that control the upper airways. Mice also fail to form small smooth cells in the proximal ureter and urine flow is impaired because of functional obstruction caused by absent peristalsis in the proximal ureter that leads to hydronephrosis and hydroureter phenotypes.</text>
</comment>
<comment type="similarity">
    <text evidence="12">Belongs to the teashirt C2H2-type zinc-finger protein family.</text>
</comment>
<comment type="sequence caution" evidence="12">
    <conflict type="frameshift">
        <sequence resource="EMBL-CDS" id="BAD90255"/>
    </conflict>
</comment>
<comment type="online information" name="Protein Spotlight">
    <link uri="https://www.proteinspotlight.org/back_issues/122"/>
    <text>Life's first breath - Issue 122 of October 2010</text>
</comment>
<keyword id="KW-0966">Cell projection</keyword>
<keyword id="KW-0175">Coiled coil</keyword>
<keyword id="KW-0217">Developmental protein</keyword>
<keyword id="KW-0238">DNA-binding</keyword>
<keyword id="KW-0371">Homeobox</keyword>
<keyword id="KW-0479">Metal-binding</keyword>
<keyword id="KW-0539">Nucleus</keyword>
<keyword id="KW-0597">Phosphoprotein</keyword>
<keyword id="KW-1185">Reference proteome</keyword>
<keyword id="KW-0677">Repeat</keyword>
<keyword id="KW-0678">Repressor</keyword>
<keyword id="KW-0804">Transcription</keyword>
<keyword id="KW-0805">Transcription regulation</keyword>
<keyword id="KW-0862">Zinc</keyword>
<keyword id="KW-0863">Zinc-finger</keyword>
<evidence type="ECO:0000250" key="1"/>
<evidence type="ECO:0000250" key="2">
    <source>
        <dbReference type="UniProtKB" id="Q63HK5"/>
    </source>
</evidence>
<evidence type="ECO:0000255" key="3"/>
<evidence type="ECO:0000255" key="4">
    <source>
        <dbReference type="PROSITE-ProRule" id="PRU00042"/>
    </source>
</evidence>
<evidence type="ECO:0000255" key="5">
    <source>
        <dbReference type="PROSITE-ProRule" id="PRU00108"/>
    </source>
</evidence>
<evidence type="ECO:0000256" key="6">
    <source>
        <dbReference type="SAM" id="MobiDB-lite"/>
    </source>
</evidence>
<evidence type="ECO:0000269" key="7">
    <source>
    </source>
</evidence>
<evidence type="ECO:0000269" key="8">
    <source>
    </source>
</evidence>
<evidence type="ECO:0000269" key="9">
    <source>
    </source>
</evidence>
<evidence type="ECO:0000269" key="10">
    <source>
    </source>
</evidence>
<evidence type="ECO:0000269" key="11">
    <source>
    </source>
</evidence>
<evidence type="ECO:0000305" key="12"/>
<name>TSH3_MOUSE</name>
<feature type="chain" id="PRO_0000047067" description="Teashirt homolog 3">
    <location>
        <begin position="1"/>
        <end position="1081"/>
    </location>
</feature>
<feature type="zinc finger region" description="C2H2-type 1" evidence="4">
    <location>
        <begin position="214"/>
        <end position="238"/>
    </location>
</feature>
<feature type="zinc finger region" description="C2H2-type 2" evidence="4">
    <location>
        <begin position="275"/>
        <end position="299"/>
    </location>
</feature>
<feature type="zinc finger region" description="C2H2-type 3; atypical" evidence="4">
    <location>
        <begin position="387"/>
        <end position="410"/>
    </location>
</feature>
<feature type="DNA-binding region" description="Homeobox; atypical" evidence="5">
    <location>
        <begin position="891"/>
        <end position="961"/>
    </location>
</feature>
<feature type="zinc finger region" description="C2H2-type 4" evidence="4">
    <location>
        <begin position="976"/>
        <end position="998"/>
    </location>
</feature>
<feature type="zinc finger region" description="C2H2-type 5" evidence="4">
    <location>
        <begin position="1041"/>
        <end position="1064"/>
    </location>
</feature>
<feature type="region of interest" description="Disordered" evidence="6">
    <location>
        <begin position="25"/>
        <end position="104"/>
    </location>
</feature>
<feature type="region of interest" description="Disordered" evidence="6">
    <location>
        <begin position="141"/>
        <end position="161"/>
    </location>
</feature>
<feature type="region of interest" description="Disordered" evidence="6">
    <location>
        <begin position="238"/>
        <end position="257"/>
    </location>
</feature>
<feature type="region of interest" description="Disordered" evidence="6">
    <location>
        <begin position="325"/>
        <end position="346"/>
    </location>
</feature>
<feature type="region of interest" description="Disordered" evidence="6">
    <location>
        <begin position="474"/>
        <end position="499"/>
    </location>
</feature>
<feature type="region of interest" description="Disordered" evidence="6">
    <location>
        <begin position="626"/>
        <end position="699"/>
    </location>
</feature>
<feature type="region of interest" description="Disordered" evidence="6">
    <location>
        <begin position="792"/>
        <end position="824"/>
    </location>
</feature>
<feature type="region of interest" description="Disordered" evidence="6">
    <location>
        <begin position="855"/>
        <end position="897"/>
    </location>
</feature>
<feature type="coiled-coil region" evidence="3">
    <location>
        <begin position="606"/>
        <end position="630"/>
    </location>
</feature>
<feature type="compositionally biased region" description="Acidic residues" evidence="6">
    <location>
        <begin position="26"/>
        <end position="37"/>
    </location>
</feature>
<feature type="compositionally biased region" description="Basic and acidic residues" evidence="6">
    <location>
        <begin position="68"/>
        <end position="87"/>
    </location>
</feature>
<feature type="compositionally biased region" description="Basic and acidic residues" evidence="6">
    <location>
        <begin position="238"/>
        <end position="247"/>
    </location>
</feature>
<feature type="compositionally biased region" description="Basic and acidic residues" evidence="6">
    <location>
        <begin position="474"/>
        <end position="491"/>
    </location>
</feature>
<feature type="compositionally biased region" description="Polar residues" evidence="6">
    <location>
        <begin position="660"/>
        <end position="670"/>
    </location>
</feature>
<feature type="compositionally biased region" description="Low complexity" evidence="6">
    <location>
        <begin position="800"/>
        <end position="824"/>
    </location>
</feature>
<feature type="compositionally biased region" description="Low complexity" evidence="6">
    <location>
        <begin position="856"/>
        <end position="869"/>
    </location>
</feature>
<feature type="modified residue" description="Phosphoserine" evidence="2">
    <location>
        <position position="682"/>
    </location>
</feature>
<feature type="sequence conflict" description="In Ref. 1; AAL38978." evidence="12" ref="1">
    <original>T</original>
    <variation>I</variation>
    <location>
        <position position="110"/>
    </location>
</feature>
<feature type="sequence conflict" description="In Ref. 2; BAD90255." evidence="12" ref="2">
    <original>S</original>
    <variation>G</variation>
    <location>
        <position position="663"/>
    </location>
</feature>